<comment type="function">
    <text evidence="1">Probable metalloprotease.</text>
</comment>
<comment type="subcellular location">
    <subcellularLocation>
        <location evidence="2">Cytoplasm</location>
    </subcellularLocation>
</comment>
<comment type="similarity">
    <text evidence="2">Belongs to the peptidase U62 family.</text>
</comment>
<keyword id="KW-0963">Cytoplasm</keyword>
<keyword id="KW-0378">Hydrolase</keyword>
<keyword id="KW-0482">Metalloprotease</keyword>
<keyword id="KW-0645">Protease</keyword>
<keyword id="KW-1185">Reference proteome</keyword>
<sequence>MKPAENSTALLKAQEQELRQAVSFAVELATKAGASAEVAVTKVSGLSVSARLQEIENVEFTNDGALGISVYMGQQKGNASTSDLSESAIKNAVEAALAIAKYTSPDDCTGLADKDLMAFDAPDLELYHAADIDVDKATELALQAEQAALQADERIINSNGASFNSHTGVKVYGNSHGMLQSYLSSRYSLSCSVIGGVEDALENDYEYTISREFDKLQSPIWVGENCAKKVVSRLNPQKLSTREVPVIFLNDVATGIISHFAAAISGGSLYRKSSFLLDHLGKQVLPDWFSISERPHLLRRLASTPFDSEGVRTQDREIVENGILQTYLVTSYSGKKLGMSSTGHAGGIHNWLVKPNLTGGLTALLRQMGTGLLVTDVMGQGVNIVTGDYSRGASGFWVENGEIQYPVAEITIAGQLQDMLKNMLAVADDIEHRSNIQTGSILLDKMKISGN</sequence>
<dbReference type="EC" id="3.4.-.-"/>
<dbReference type="EMBL" id="L42023">
    <property type="protein sequence ID" value="AAC22807.1"/>
    <property type="molecule type" value="Genomic_DNA"/>
</dbReference>
<dbReference type="PIR" id="C64186">
    <property type="entry name" value="C64186"/>
</dbReference>
<dbReference type="RefSeq" id="NP_439310.1">
    <property type="nucleotide sequence ID" value="NC_000907.1"/>
</dbReference>
<dbReference type="SMR" id="P45077"/>
<dbReference type="STRING" id="71421.HI_1152"/>
<dbReference type="EnsemblBacteria" id="AAC22807">
    <property type="protein sequence ID" value="AAC22807"/>
    <property type="gene ID" value="HI_1152"/>
</dbReference>
<dbReference type="KEGG" id="hin:HI_1152"/>
<dbReference type="PATRIC" id="fig|71421.8.peg.1202"/>
<dbReference type="eggNOG" id="COG0312">
    <property type="taxonomic scope" value="Bacteria"/>
</dbReference>
<dbReference type="HOGENOM" id="CLU_026425_0_0_6"/>
<dbReference type="OrthoDB" id="9803618at2"/>
<dbReference type="PhylomeDB" id="P45077"/>
<dbReference type="BioCyc" id="HINF71421:G1GJ1-1185-MONOMER"/>
<dbReference type="Proteomes" id="UP000000579">
    <property type="component" value="Chromosome"/>
</dbReference>
<dbReference type="GO" id="GO:0005829">
    <property type="term" value="C:cytosol"/>
    <property type="evidence" value="ECO:0000318"/>
    <property type="project" value="GO_Central"/>
</dbReference>
<dbReference type="GO" id="GO:0008237">
    <property type="term" value="F:metallopeptidase activity"/>
    <property type="evidence" value="ECO:0007669"/>
    <property type="project" value="UniProtKB-KW"/>
</dbReference>
<dbReference type="GO" id="GO:0006508">
    <property type="term" value="P:proteolysis"/>
    <property type="evidence" value="ECO:0007669"/>
    <property type="project" value="UniProtKB-KW"/>
</dbReference>
<dbReference type="FunFam" id="3.30.2290.10:FF:000002">
    <property type="entry name" value="Metalloprotease PmbA homolog"/>
    <property type="match status" value="1"/>
</dbReference>
<dbReference type="Gene3D" id="3.30.2290.10">
    <property type="entry name" value="PmbA/TldD superfamily"/>
    <property type="match status" value="1"/>
</dbReference>
<dbReference type="InterPro" id="IPR045569">
    <property type="entry name" value="Metalloprtase-TldD/E_C"/>
</dbReference>
<dbReference type="InterPro" id="IPR045570">
    <property type="entry name" value="Metalloprtase-TldD/E_cen_dom"/>
</dbReference>
<dbReference type="InterPro" id="IPR002510">
    <property type="entry name" value="Metalloprtase-TldD/E_N"/>
</dbReference>
<dbReference type="InterPro" id="IPR047657">
    <property type="entry name" value="PmbA"/>
</dbReference>
<dbReference type="InterPro" id="IPR035068">
    <property type="entry name" value="TldD/PmbA_N"/>
</dbReference>
<dbReference type="InterPro" id="IPR036059">
    <property type="entry name" value="TldD/PmbA_sf"/>
</dbReference>
<dbReference type="NCBIfam" id="NF008268">
    <property type="entry name" value="PRK11040.1"/>
    <property type="match status" value="1"/>
</dbReference>
<dbReference type="PANTHER" id="PTHR43421">
    <property type="entry name" value="METALLOPROTEASE PMBA"/>
    <property type="match status" value="1"/>
</dbReference>
<dbReference type="PANTHER" id="PTHR43421:SF1">
    <property type="entry name" value="METALLOPROTEASE PMBA"/>
    <property type="match status" value="1"/>
</dbReference>
<dbReference type="Pfam" id="PF01523">
    <property type="entry name" value="PmbA_TldD_1st"/>
    <property type="match status" value="1"/>
</dbReference>
<dbReference type="Pfam" id="PF19290">
    <property type="entry name" value="PmbA_TldD_2nd"/>
    <property type="match status" value="1"/>
</dbReference>
<dbReference type="Pfam" id="PF19289">
    <property type="entry name" value="PmbA_TldD_3rd"/>
    <property type="match status" value="1"/>
</dbReference>
<dbReference type="SUPFAM" id="SSF111283">
    <property type="entry name" value="Putative modulator of DNA gyrase, PmbA/TldD"/>
    <property type="match status" value="1"/>
</dbReference>
<accession>P45077</accession>
<proteinExistence type="inferred from homology"/>
<name>PMBA_HAEIN</name>
<reference key="1">
    <citation type="journal article" date="1995" name="Science">
        <title>Whole-genome random sequencing and assembly of Haemophilus influenzae Rd.</title>
        <authorList>
            <person name="Fleischmann R.D."/>
            <person name="Adams M.D."/>
            <person name="White O."/>
            <person name="Clayton R.A."/>
            <person name="Kirkness E.F."/>
            <person name="Kerlavage A.R."/>
            <person name="Bult C.J."/>
            <person name="Tomb J.-F."/>
            <person name="Dougherty B.A."/>
            <person name="Merrick J.M."/>
            <person name="McKenney K."/>
            <person name="Sutton G.G."/>
            <person name="FitzHugh W."/>
            <person name="Fields C.A."/>
            <person name="Gocayne J.D."/>
            <person name="Scott J.D."/>
            <person name="Shirley R."/>
            <person name="Liu L.-I."/>
            <person name="Glodek A."/>
            <person name="Kelley J.M."/>
            <person name="Weidman J.F."/>
            <person name="Phillips C.A."/>
            <person name="Spriggs T."/>
            <person name="Hedblom E."/>
            <person name="Cotton M.D."/>
            <person name="Utterback T.R."/>
            <person name="Hanna M.C."/>
            <person name="Nguyen D.T."/>
            <person name="Saudek D.M."/>
            <person name="Brandon R.C."/>
            <person name="Fine L.D."/>
            <person name="Fritchman J.L."/>
            <person name="Fuhrmann J.L."/>
            <person name="Geoghagen N.S.M."/>
            <person name="Gnehm C.L."/>
            <person name="McDonald L.A."/>
            <person name="Small K.V."/>
            <person name="Fraser C.M."/>
            <person name="Smith H.O."/>
            <person name="Venter J.C."/>
        </authorList>
    </citation>
    <scope>NUCLEOTIDE SEQUENCE [LARGE SCALE GENOMIC DNA]</scope>
    <source>
        <strain>ATCC 51907 / DSM 11121 / KW20 / Rd</strain>
    </source>
</reference>
<organism>
    <name type="scientific">Haemophilus influenzae (strain ATCC 51907 / DSM 11121 / KW20 / Rd)</name>
    <dbReference type="NCBI Taxonomy" id="71421"/>
    <lineage>
        <taxon>Bacteria</taxon>
        <taxon>Pseudomonadati</taxon>
        <taxon>Pseudomonadota</taxon>
        <taxon>Gammaproteobacteria</taxon>
        <taxon>Pasteurellales</taxon>
        <taxon>Pasteurellaceae</taxon>
        <taxon>Haemophilus</taxon>
    </lineage>
</organism>
<protein>
    <recommendedName>
        <fullName>Metalloprotease PmbA homolog</fullName>
        <ecNumber>3.4.-.-</ecNumber>
    </recommendedName>
</protein>
<feature type="chain" id="PRO_0000142353" description="Metalloprotease PmbA homolog">
    <location>
        <begin position="1"/>
        <end position="451"/>
    </location>
</feature>
<evidence type="ECO:0000250" key="1"/>
<evidence type="ECO:0000305" key="2"/>
<gene>
    <name type="primary">pmbA</name>
    <name type="ordered locus">HI_1152</name>
</gene>